<protein>
    <recommendedName>
        <fullName evidence="1">Ribosomal RNA large subunit methyltransferase G</fullName>
        <ecNumber evidence="1">2.1.1.174</ecNumber>
    </recommendedName>
    <alternativeName>
        <fullName evidence="1">23S rRNA m2G1835 methyltransferase</fullName>
    </alternativeName>
    <alternativeName>
        <fullName evidence="1">rRNA (guanine-N(2)-)-methyltransferase RlmG</fullName>
    </alternativeName>
</protein>
<accession>B4TIU8</accession>
<gene>
    <name evidence="1" type="primary">rlmG</name>
    <name type="ordered locus">SeHA_C3515</name>
</gene>
<keyword id="KW-0963">Cytoplasm</keyword>
<keyword id="KW-0489">Methyltransferase</keyword>
<keyword id="KW-0698">rRNA processing</keyword>
<keyword id="KW-0949">S-adenosyl-L-methionine</keyword>
<keyword id="KW-0808">Transferase</keyword>
<evidence type="ECO:0000255" key="1">
    <source>
        <dbReference type="HAMAP-Rule" id="MF_01859"/>
    </source>
</evidence>
<organism>
    <name type="scientific">Salmonella heidelberg (strain SL476)</name>
    <dbReference type="NCBI Taxonomy" id="454169"/>
    <lineage>
        <taxon>Bacteria</taxon>
        <taxon>Pseudomonadati</taxon>
        <taxon>Pseudomonadota</taxon>
        <taxon>Gammaproteobacteria</taxon>
        <taxon>Enterobacterales</taxon>
        <taxon>Enterobacteriaceae</taxon>
        <taxon>Salmonella</taxon>
    </lineage>
</organism>
<comment type="function">
    <text evidence="1">Specifically methylates the guanine in position 1835 (m2G1835) of 23S rRNA.</text>
</comment>
<comment type="catalytic activity">
    <reaction evidence="1">
        <text>guanosine(1835) in 23S rRNA + S-adenosyl-L-methionine = N(2)-methylguanosine(1835) in 23S rRNA + S-adenosyl-L-homocysteine + H(+)</text>
        <dbReference type="Rhea" id="RHEA:42744"/>
        <dbReference type="Rhea" id="RHEA-COMP:10217"/>
        <dbReference type="Rhea" id="RHEA-COMP:10218"/>
        <dbReference type="ChEBI" id="CHEBI:15378"/>
        <dbReference type="ChEBI" id="CHEBI:57856"/>
        <dbReference type="ChEBI" id="CHEBI:59789"/>
        <dbReference type="ChEBI" id="CHEBI:74269"/>
        <dbReference type="ChEBI" id="CHEBI:74481"/>
        <dbReference type="EC" id="2.1.1.174"/>
    </reaction>
</comment>
<comment type="subcellular location">
    <subcellularLocation>
        <location evidence="1">Cytoplasm</location>
    </subcellularLocation>
</comment>
<comment type="similarity">
    <text evidence="1">Belongs to the methyltransferase superfamily. RlmG family.</text>
</comment>
<reference key="1">
    <citation type="journal article" date="2011" name="J. Bacteriol.">
        <title>Comparative genomics of 28 Salmonella enterica isolates: evidence for CRISPR-mediated adaptive sublineage evolution.</title>
        <authorList>
            <person name="Fricke W.F."/>
            <person name="Mammel M.K."/>
            <person name="McDermott P.F."/>
            <person name="Tartera C."/>
            <person name="White D.G."/>
            <person name="Leclerc J.E."/>
            <person name="Ravel J."/>
            <person name="Cebula T.A."/>
        </authorList>
    </citation>
    <scope>NUCLEOTIDE SEQUENCE [LARGE SCALE GENOMIC DNA]</scope>
    <source>
        <strain>SL476</strain>
    </source>
</reference>
<feature type="chain" id="PRO_0000366495" description="Ribosomal RNA large subunit methyltransferase G">
    <location>
        <begin position="1"/>
        <end position="378"/>
    </location>
</feature>
<name>RLMG_SALHS</name>
<sequence length="378" mass="42299">MSHVDDGFRSLTLKRFPQTDDVNPLLAWEAADEYLLQQLDETEIRGPVLILNDTFGALSCALAEHSPYSIGDSYLSELGTRENLRHNGIAESSVTFLDSTADYPQAPGVVLIKVPKTLALLEQQLRALRKVVTAQTRIIAGAKARDIHTSTLELFEKVLGPTTTTLAWKKARLINCTFSHPQLADAPQTLNWKLEDTGWTIHNHANVFSRTGLDIGARFFMQHLPENLDGEIVDLGCGNGVIGLSLLAKNPQANVVFVDESPMAVDSSRLNVETNLPEAFERCEFMINNALSGVEPFRFNAVFCNPPFHQKHALTDNIAWEMFHHARRCLKINGELYIVANRHLDYFHKLKKIFGNCATIATNNKFVILKAVKQGRRR</sequence>
<dbReference type="EC" id="2.1.1.174" evidence="1"/>
<dbReference type="EMBL" id="CP001120">
    <property type="protein sequence ID" value="ACF68755.1"/>
    <property type="molecule type" value="Genomic_DNA"/>
</dbReference>
<dbReference type="RefSeq" id="WP_000019983.1">
    <property type="nucleotide sequence ID" value="NC_011083.1"/>
</dbReference>
<dbReference type="SMR" id="B4TIU8"/>
<dbReference type="KEGG" id="seh:SeHA_C3515"/>
<dbReference type="HOGENOM" id="CLU_040288_4_0_6"/>
<dbReference type="Proteomes" id="UP000001866">
    <property type="component" value="Chromosome"/>
</dbReference>
<dbReference type="GO" id="GO:0005737">
    <property type="term" value="C:cytoplasm"/>
    <property type="evidence" value="ECO:0007669"/>
    <property type="project" value="UniProtKB-SubCell"/>
</dbReference>
<dbReference type="GO" id="GO:0052916">
    <property type="term" value="F:23S rRNA (guanine(1835)-N(2))-methyltransferase activity"/>
    <property type="evidence" value="ECO:0007669"/>
    <property type="project" value="UniProtKB-EC"/>
</dbReference>
<dbReference type="GO" id="GO:0003676">
    <property type="term" value="F:nucleic acid binding"/>
    <property type="evidence" value="ECO:0007669"/>
    <property type="project" value="InterPro"/>
</dbReference>
<dbReference type="CDD" id="cd02440">
    <property type="entry name" value="AdoMet_MTases"/>
    <property type="match status" value="1"/>
</dbReference>
<dbReference type="FunFam" id="3.40.50.150:FF:000046">
    <property type="entry name" value="Ribosomal RNA large subunit methyltransferase G"/>
    <property type="match status" value="1"/>
</dbReference>
<dbReference type="FunFam" id="3.40.50.150:FF:000047">
    <property type="entry name" value="Ribosomal RNA large subunit methyltransferase G"/>
    <property type="match status" value="1"/>
</dbReference>
<dbReference type="Gene3D" id="3.40.50.150">
    <property type="entry name" value="Vaccinia Virus protein VP39"/>
    <property type="match status" value="2"/>
</dbReference>
<dbReference type="HAMAP" id="MF_01859">
    <property type="entry name" value="23SrRNA_methyltr_G"/>
    <property type="match status" value="1"/>
</dbReference>
<dbReference type="InterPro" id="IPR002052">
    <property type="entry name" value="DNA_methylase_N6_adenine_CS"/>
</dbReference>
<dbReference type="InterPro" id="IPR017237">
    <property type="entry name" value="rRNA_m2G-MeTrfase_RlmG"/>
</dbReference>
<dbReference type="InterPro" id="IPR046977">
    <property type="entry name" value="RsmC/RlmG"/>
</dbReference>
<dbReference type="InterPro" id="IPR029063">
    <property type="entry name" value="SAM-dependent_MTases_sf"/>
</dbReference>
<dbReference type="InterPro" id="IPR007848">
    <property type="entry name" value="Small_mtfrase_dom"/>
</dbReference>
<dbReference type="NCBIfam" id="NF011577">
    <property type="entry name" value="PRK15001.1"/>
    <property type="match status" value="1"/>
</dbReference>
<dbReference type="PANTHER" id="PTHR47816:SF5">
    <property type="entry name" value="RIBOSOMAL RNA LARGE SUBUNIT METHYLTRANSFERASE G"/>
    <property type="match status" value="1"/>
</dbReference>
<dbReference type="PANTHER" id="PTHR47816">
    <property type="entry name" value="RIBOSOMAL RNA SMALL SUBUNIT METHYLTRANSFERASE C"/>
    <property type="match status" value="1"/>
</dbReference>
<dbReference type="Pfam" id="PF05175">
    <property type="entry name" value="MTS"/>
    <property type="match status" value="1"/>
</dbReference>
<dbReference type="PIRSF" id="PIRSF037565">
    <property type="entry name" value="RRNA_m2G_Mtase_RsmD_prd"/>
    <property type="match status" value="1"/>
</dbReference>
<dbReference type="SUPFAM" id="SSF53335">
    <property type="entry name" value="S-adenosyl-L-methionine-dependent methyltransferases"/>
    <property type="match status" value="1"/>
</dbReference>
<proteinExistence type="inferred from homology"/>